<accession>B4SBX2</accession>
<comment type="function">
    <text evidence="1">Located on the platform of the 30S subunit, it bridges several disparate RNA helices of the 16S rRNA. Forms part of the Shine-Dalgarno cleft in the 70S ribosome.</text>
</comment>
<comment type="subunit">
    <text evidence="1">Part of the 30S ribosomal subunit. Interacts with proteins S7 and S18. Binds to IF-3.</text>
</comment>
<comment type="similarity">
    <text evidence="1">Belongs to the universal ribosomal protein uS11 family.</text>
</comment>
<evidence type="ECO:0000255" key="1">
    <source>
        <dbReference type="HAMAP-Rule" id="MF_01310"/>
    </source>
</evidence>
<evidence type="ECO:0000305" key="2"/>
<organism>
    <name type="scientific">Pelodictyon phaeoclathratiforme (strain DSM 5477 / BU-1)</name>
    <dbReference type="NCBI Taxonomy" id="324925"/>
    <lineage>
        <taxon>Bacteria</taxon>
        <taxon>Pseudomonadati</taxon>
        <taxon>Chlorobiota</taxon>
        <taxon>Chlorobiia</taxon>
        <taxon>Chlorobiales</taxon>
        <taxon>Chlorobiaceae</taxon>
        <taxon>Chlorobium/Pelodictyon group</taxon>
        <taxon>Pelodictyon</taxon>
    </lineage>
</organism>
<feature type="chain" id="PRO_1000141118" description="Small ribosomal subunit protein uS11">
    <location>
        <begin position="1"/>
        <end position="127"/>
    </location>
</feature>
<keyword id="KW-1185">Reference proteome</keyword>
<keyword id="KW-0687">Ribonucleoprotein</keyword>
<keyword id="KW-0689">Ribosomal protein</keyword>
<keyword id="KW-0694">RNA-binding</keyword>
<keyword id="KW-0699">rRNA-binding</keyword>
<name>RS11_PELPB</name>
<dbReference type="EMBL" id="CP001110">
    <property type="protein sequence ID" value="ACF42647.1"/>
    <property type="molecule type" value="Genomic_DNA"/>
</dbReference>
<dbReference type="RefSeq" id="WP_012507142.1">
    <property type="nucleotide sequence ID" value="NC_011060.1"/>
</dbReference>
<dbReference type="SMR" id="B4SBX2"/>
<dbReference type="STRING" id="324925.Ppha_0314"/>
<dbReference type="KEGG" id="pph:Ppha_0314"/>
<dbReference type="eggNOG" id="COG0100">
    <property type="taxonomic scope" value="Bacteria"/>
</dbReference>
<dbReference type="HOGENOM" id="CLU_072439_5_0_10"/>
<dbReference type="OrthoDB" id="9806415at2"/>
<dbReference type="Proteomes" id="UP000002724">
    <property type="component" value="Chromosome"/>
</dbReference>
<dbReference type="GO" id="GO:1990904">
    <property type="term" value="C:ribonucleoprotein complex"/>
    <property type="evidence" value="ECO:0007669"/>
    <property type="project" value="UniProtKB-KW"/>
</dbReference>
<dbReference type="GO" id="GO:0005840">
    <property type="term" value="C:ribosome"/>
    <property type="evidence" value="ECO:0007669"/>
    <property type="project" value="UniProtKB-KW"/>
</dbReference>
<dbReference type="GO" id="GO:0019843">
    <property type="term" value="F:rRNA binding"/>
    <property type="evidence" value="ECO:0007669"/>
    <property type="project" value="UniProtKB-UniRule"/>
</dbReference>
<dbReference type="GO" id="GO:0003735">
    <property type="term" value="F:structural constituent of ribosome"/>
    <property type="evidence" value="ECO:0007669"/>
    <property type="project" value="InterPro"/>
</dbReference>
<dbReference type="GO" id="GO:0006412">
    <property type="term" value="P:translation"/>
    <property type="evidence" value="ECO:0007669"/>
    <property type="project" value="UniProtKB-UniRule"/>
</dbReference>
<dbReference type="FunFam" id="3.30.420.80:FF:000004">
    <property type="entry name" value="30S ribosomal protein S11"/>
    <property type="match status" value="1"/>
</dbReference>
<dbReference type="Gene3D" id="3.30.420.80">
    <property type="entry name" value="Ribosomal protein S11"/>
    <property type="match status" value="1"/>
</dbReference>
<dbReference type="HAMAP" id="MF_01310">
    <property type="entry name" value="Ribosomal_uS11"/>
    <property type="match status" value="1"/>
</dbReference>
<dbReference type="InterPro" id="IPR001971">
    <property type="entry name" value="Ribosomal_uS11"/>
</dbReference>
<dbReference type="InterPro" id="IPR019981">
    <property type="entry name" value="Ribosomal_uS11_bac-type"/>
</dbReference>
<dbReference type="InterPro" id="IPR018102">
    <property type="entry name" value="Ribosomal_uS11_CS"/>
</dbReference>
<dbReference type="InterPro" id="IPR036967">
    <property type="entry name" value="Ribosomal_uS11_sf"/>
</dbReference>
<dbReference type="NCBIfam" id="NF003698">
    <property type="entry name" value="PRK05309.1"/>
    <property type="match status" value="1"/>
</dbReference>
<dbReference type="NCBIfam" id="TIGR03632">
    <property type="entry name" value="uS11_bact"/>
    <property type="match status" value="1"/>
</dbReference>
<dbReference type="PANTHER" id="PTHR11759">
    <property type="entry name" value="40S RIBOSOMAL PROTEIN S14/30S RIBOSOMAL PROTEIN S11"/>
    <property type="match status" value="1"/>
</dbReference>
<dbReference type="Pfam" id="PF00411">
    <property type="entry name" value="Ribosomal_S11"/>
    <property type="match status" value="1"/>
</dbReference>
<dbReference type="PIRSF" id="PIRSF002131">
    <property type="entry name" value="Ribosomal_S11"/>
    <property type="match status" value="1"/>
</dbReference>
<dbReference type="SUPFAM" id="SSF53137">
    <property type="entry name" value="Translational machinery components"/>
    <property type="match status" value="1"/>
</dbReference>
<dbReference type="PROSITE" id="PS00054">
    <property type="entry name" value="RIBOSOMAL_S11"/>
    <property type="match status" value="1"/>
</dbReference>
<proteinExistence type="inferred from homology"/>
<protein>
    <recommendedName>
        <fullName evidence="1">Small ribosomal subunit protein uS11</fullName>
    </recommendedName>
    <alternativeName>
        <fullName evidence="2">30S ribosomal protein S11</fullName>
    </alternativeName>
</protein>
<sequence length="127" mass="13641">MATISKKKKKVKVTPEGAVHIKASFNNIMVTITDLQGNTVSWSSAGKNGFKGSKKNTPYASQITSEAAAKEAYDLGMRHVNVFIKGPGAGRDAAIRALQGAGLDVRTIKDITPLPHNGCRPPKRRRV</sequence>
<gene>
    <name evidence="1" type="primary">rpsK</name>
    <name type="ordered locus">Ppha_0314</name>
</gene>
<reference key="1">
    <citation type="submission" date="2008-06" db="EMBL/GenBank/DDBJ databases">
        <title>Complete sequence of Pelodictyon phaeoclathratiforme BU-1.</title>
        <authorList>
            <consortium name="US DOE Joint Genome Institute"/>
            <person name="Lucas S."/>
            <person name="Copeland A."/>
            <person name="Lapidus A."/>
            <person name="Glavina del Rio T."/>
            <person name="Dalin E."/>
            <person name="Tice H."/>
            <person name="Bruce D."/>
            <person name="Goodwin L."/>
            <person name="Pitluck S."/>
            <person name="Schmutz J."/>
            <person name="Larimer F."/>
            <person name="Land M."/>
            <person name="Hauser L."/>
            <person name="Kyrpides N."/>
            <person name="Mikhailova N."/>
            <person name="Liu Z."/>
            <person name="Li T."/>
            <person name="Zhao F."/>
            <person name="Overmann J."/>
            <person name="Bryant D.A."/>
            <person name="Richardson P."/>
        </authorList>
    </citation>
    <scope>NUCLEOTIDE SEQUENCE [LARGE SCALE GENOMIC DNA]</scope>
    <source>
        <strain>DSM 5477 / BU-1</strain>
    </source>
</reference>